<protein>
    <recommendedName>
        <fullName evidence="1">2-dehydro-3-deoxyphosphooctonate aldolase</fullName>
        <ecNumber evidence="1">2.5.1.55</ecNumber>
    </recommendedName>
    <alternativeName>
        <fullName evidence="1">3-deoxy-D-manno-octulosonic acid 8-phosphate synthase</fullName>
    </alternativeName>
    <alternativeName>
        <fullName evidence="1">KDO-8-phosphate synthase</fullName>
        <shortName evidence="1">KDO 8-P synthase</shortName>
        <shortName evidence="1">KDOPS</shortName>
    </alternativeName>
    <alternativeName>
        <fullName evidence="1">Phospho-2-dehydro-3-deoxyoctonate aldolase</fullName>
    </alternativeName>
</protein>
<sequence length="284" mass="30833">MKQKVVSIGDINVANDLPFVLFGGMNVLESRDLAMRICEHYVTVTQKLGIPYVFKASFDKANRSSIHSYRGPGLEEGMKIFQELKQTFGVKIITDVHEPSQAQPVADVVDVIQLPAFLARQTDLVEAMAKTGAVINVKKPQFVSPGQMGNIVDKFKEGGNEKVILCDRGANFGYDNLVVDMLGFSIMKKVSGNSPVIFDVTHALQCRDPFGAASGGRRAQVAELARAGMAVGLAGLFIEAHPDPEHAKCDGPSALPLAKLEPFLKQMKAIDDLVKGFEELDTSK</sequence>
<comment type="catalytic activity">
    <reaction evidence="1">
        <text>D-arabinose 5-phosphate + phosphoenolpyruvate + H2O = 3-deoxy-alpha-D-manno-2-octulosonate-8-phosphate + phosphate</text>
        <dbReference type="Rhea" id="RHEA:14053"/>
        <dbReference type="ChEBI" id="CHEBI:15377"/>
        <dbReference type="ChEBI" id="CHEBI:43474"/>
        <dbReference type="ChEBI" id="CHEBI:57693"/>
        <dbReference type="ChEBI" id="CHEBI:58702"/>
        <dbReference type="ChEBI" id="CHEBI:85985"/>
        <dbReference type="EC" id="2.5.1.55"/>
    </reaction>
</comment>
<comment type="pathway">
    <text evidence="1">Carbohydrate biosynthesis; 3-deoxy-D-manno-octulosonate biosynthesis; 3-deoxy-D-manno-octulosonate from D-ribulose 5-phosphate: step 2/3.</text>
</comment>
<comment type="pathway">
    <text evidence="1">Bacterial outer membrane biogenesis; lipopolysaccharide biosynthesis.</text>
</comment>
<comment type="subcellular location">
    <subcellularLocation>
        <location evidence="1">Cytoplasm</location>
    </subcellularLocation>
</comment>
<comment type="similarity">
    <text evidence="1">Belongs to the KdsA family.</text>
</comment>
<gene>
    <name evidence="1" type="primary">kdsA</name>
    <name type="ordered locus">ECDH10B_1268</name>
</gene>
<organism>
    <name type="scientific">Escherichia coli (strain K12 / DH10B)</name>
    <dbReference type="NCBI Taxonomy" id="316385"/>
    <lineage>
        <taxon>Bacteria</taxon>
        <taxon>Pseudomonadati</taxon>
        <taxon>Pseudomonadota</taxon>
        <taxon>Gammaproteobacteria</taxon>
        <taxon>Enterobacterales</taxon>
        <taxon>Enterobacteriaceae</taxon>
        <taxon>Escherichia</taxon>
    </lineage>
</organism>
<proteinExistence type="inferred from homology"/>
<feature type="chain" id="PRO_1000091813" description="2-dehydro-3-deoxyphosphooctonate aldolase">
    <location>
        <begin position="1"/>
        <end position="284"/>
    </location>
</feature>
<reference key="1">
    <citation type="journal article" date="2008" name="J. Bacteriol.">
        <title>The complete genome sequence of Escherichia coli DH10B: insights into the biology of a laboratory workhorse.</title>
        <authorList>
            <person name="Durfee T."/>
            <person name="Nelson R."/>
            <person name="Baldwin S."/>
            <person name="Plunkett G. III"/>
            <person name="Burland V."/>
            <person name="Mau B."/>
            <person name="Petrosino J.F."/>
            <person name="Qin X."/>
            <person name="Muzny D.M."/>
            <person name="Ayele M."/>
            <person name="Gibbs R.A."/>
            <person name="Csorgo B."/>
            <person name="Posfai G."/>
            <person name="Weinstock G.M."/>
            <person name="Blattner F.R."/>
        </authorList>
    </citation>
    <scope>NUCLEOTIDE SEQUENCE [LARGE SCALE GENOMIC DNA]</scope>
    <source>
        <strain>K12 / DH10B</strain>
    </source>
</reference>
<name>KDSA_ECODH</name>
<keyword id="KW-0963">Cytoplasm</keyword>
<keyword id="KW-0448">Lipopolysaccharide biosynthesis</keyword>
<keyword id="KW-0808">Transferase</keyword>
<dbReference type="EC" id="2.5.1.55" evidence="1"/>
<dbReference type="EMBL" id="CP000948">
    <property type="protein sequence ID" value="ACB02385.1"/>
    <property type="molecule type" value="Genomic_DNA"/>
</dbReference>
<dbReference type="RefSeq" id="WP_000811065.1">
    <property type="nucleotide sequence ID" value="NC_010473.1"/>
</dbReference>
<dbReference type="SMR" id="B1XAQ6"/>
<dbReference type="GeneID" id="75203328"/>
<dbReference type="KEGG" id="ecd:ECDH10B_1268"/>
<dbReference type="HOGENOM" id="CLU_036666_0_0_6"/>
<dbReference type="UniPathway" id="UPA00030"/>
<dbReference type="UniPathway" id="UPA00357">
    <property type="reaction ID" value="UER00474"/>
</dbReference>
<dbReference type="GO" id="GO:0005737">
    <property type="term" value="C:cytoplasm"/>
    <property type="evidence" value="ECO:0007669"/>
    <property type="project" value="UniProtKB-SubCell"/>
</dbReference>
<dbReference type="GO" id="GO:0008676">
    <property type="term" value="F:3-deoxy-8-phosphooctulonate synthase activity"/>
    <property type="evidence" value="ECO:0007669"/>
    <property type="project" value="UniProtKB-UniRule"/>
</dbReference>
<dbReference type="GO" id="GO:0019294">
    <property type="term" value="P:keto-3-deoxy-D-manno-octulosonic acid biosynthetic process"/>
    <property type="evidence" value="ECO:0007669"/>
    <property type="project" value="UniProtKB-UniRule"/>
</dbReference>
<dbReference type="FunFam" id="3.20.20.70:FF:000058">
    <property type="entry name" value="2-dehydro-3-deoxyphosphooctonate aldolase"/>
    <property type="match status" value="1"/>
</dbReference>
<dbReference type="Gene3D" id="3.20.20.70">
    <property type="entry name" value="Aldolase class I"/>
    <property type="match status" value="1"/>
</dbReference>
<dbReference type="HAMAP" id="MF_00056">
    <property type="entry name" value="KDO8P_synth"/>
    <property type="match status" value="1"/>
</dbReference>
<dbReference type="InterPro" id="IPR013785">
    <property type="entry name" value="Aldolase_TIM"/>
</dbReference>
<dbReference type="InterPro" id="IPR006218">
    <property type="entry name" value="DAHP1/KDSA"/>
</dbReference>
<dbReference type="InterPro" id="IPR006269">
    <property type="entry name" value="KDO8P_synthase"/>
</dbReference>
<dbReference type="NCBIfam" id="TIGR01362">
    <property type="entry name" value="KDO8P_synth"/>
    <property type="match status" value="1"/>
</dbReference>
<dbReference type="NCBIfam" id="NF003543">
    <property type="entry name" value="PRK05198.1"/>
    <property type="match status" value="1"/>
</dbReference>
<dbReference type="NCBIfam" id="NF009109">
    <property type="entry name" value="PRK12457.1"/>
    <property type="match status" value="1"/>
</dbReference>
<dbReference type="PANTHER" id="PTHR21057">
    <property type="entry name" value="PHOSPHO-2-DEHYDRO-3-DEOXYHEPTONATE ALDOLASE"/>
    <property type="match status" value="1"/>
</dbReference>
<dbReference type="Pfam" id="PF00793">
    <property type="entry name" value="DAHP_synth_1"/>
    <property type="match status" value="1"/>
</dbReference>
<dbReference type="SUPFAM" id="SSF51569">
    <property type="entry name" value="Aldolase"/>
    <property type="match status" value="1"/>
</dbReference>
<accession>B1XAQ6</accession>
<evidence type="ECO:0000255" key="1">
    <source>
        <dbReference type="HAMAP-Rule" id="MF_00056"/>
    </source>
</evidence>